<proteinExistence type="evidence at protein level"/>
<keyword id="KW-0274">FAD</keyword>
<keyword id="KW-0285">Flavoprotein</keyword>
<keyword id="KW-0520">NAD</keyword>
<keyword id="KW-0521">NADP</keyword>
<keyword id="KW-0560">Oxidoreductase</keyword>
<evidence type="ECO:0000250" key="1"/>
<evidence type="ECO:0000255" key="2"/>
<evidence type="ECO:0000269" key="3">
    <source>
    </source>
</evidence>
<evidence type="ECO:0000305" key="4"/>
<protein>
    <recommendedName>
        <fullName>Ferredoxin--NAD(P)(+) reductase fdr</fullName>
        <ecNumber>1.18.1.2</ecNumber>
        <ecNumber>1.18.1.3</ecNumber>
    </recommendedName>
    <alternativeName>
        <fullName>Carbazole 1,9a-dioxygenase, ferredoxin reductase component</fullName>
        <shortName>CARDO</shortName>
    </alternativeName>
</protein>
<dbReference type="EC" id="1.18.1.2"/>
<dbReference type="EC" id="1.18.1.3"/>
<dbReference type="EMBL" id="GU123624">
    <property type="protein sequence ID" value="ADC31800.1"/>
    <property type="molecule type" value="Genomic_DNA"/>
</dbReference>
<dbReference type="SMR" id="D5IGG6"/>
<dbReference type="BioCyc" id="MetaCyc:MONOMER-15739"/>
<dbReference type="GO" id="GO:0005737">
    <property type="term" value="C:cytoplasm"/>
    <property type="evidence" value="ECO:0007669"/>
    <property type="project" value="TreeGrafter"/>
</dbReference>
<dbReference type="GO" id="GO:0051537">
    <property type="term" value="F:2 iron, 2 sulfur cluster binding"/>
    <property type="evidence" value="ECO:0000250"/>
    <property type="project" value="UniProtKB"/>
</dbReference>
<dbReference type="GO" id="GO:0071949">
    <property type="term" value="F:FAD binding"/>
    <property type="evidence" value="ECO:0000250"/>
    <property type="project" value="UniProtKB"/>
</dbReference>
<dbReference type="GO" id="GO:0008860">
    <property type="term" value="F:ferredoxin-NAD+ reductase activity"/>
    <property type="evidence" value="ECO:0000250"/>
    <property type="project" value="UniProtKB"/>
</dbReference>
<dbReference type="GO" id="GO:0004324">
    <property type="term" value="F:ferredoxin-NADP+ reductase activity"/>
    <property type="evidence" value="ECO:0000250"/>
    <property type="project" value="UniProtKB"/>
</dbReference>
<dbReference type="GO" id="GO:0051287">
    <property type="term" value="F:NAD binding"/>
    <property type="evidence" value="ECO:0000250"/>
    <property type="project" value="UniProtKB"/>
</dbReference>
<dbReference type="GO" id="GO:0050661">
    <property type="term" value="F:NADP binding"/>
    <property type="evidence" value="ECO:0000250"/>
    <property type="project" value="UniProtKB"/>
</dbReference>
<dbReference type="GO" id="GO:0016651">
    <property type="term" value="F:oxidoreductase activity, acting on NAD(P)H"/>
    <property type="evidence" value="ECO:0007669"/>
    <property type="project" value="TreeGrafter"/>
</dbReference>
<dbReference type="GO" id="GO:0046232">
    <property type="term" value="P:carbazole catabolic process"/>
    <property type="evidence" value="ECO:0000314"/>
    <property type="project" value="UniProtKB"/>
</dbReference>
<dbReference type="Gene3D" id="3.30.390.30">
    <property type="match status" value="1"/>
</dbReference>
<dbReference type="Gene3D" id="3.50.50.60">
    <property type="entry name" value="FAD/NAD(P)-binding domain"/>
    <property type="match status" value="2"/>
</dbReference>
<dbReference type="InterPro" id="IPR050446">
    <property type="entry name" value="FAD-oxidoreductase/Apoptosis"/>
</dbReference>
<dbReference type="InterPro" id="IPR036188">
    <property type="entry name" value="FAD/NAD-bd_sf"/>
</dbReference>
<dbReference type="InterPro" id="IPR023753">
    <property type="entry name" value="FAD/NAD-binding_dom"/>
</dbReference>
<dbReference type="InterPro" id="IPR016156">
    <property type="entry name" value="FAD/NAD-linked_Rdtase_dimer_sf"/>
</dbReference>
<dbReference type="InterPro" id="IPR028202">
    <property type="entry name" value="Reductase_C"/>
</dbReference>
<dbReference type="PANTHER" id="PTHR43557">
    <property type="entry name" value="APOPTOSIS-INDUCING FACTOR 1"/>
    <property type="match status" value="1"/>
</dbReference>
<dbReference type="PANTHER" id="PTHR43557:SF2">
    <property type="entry name" value="RIESKE DOMAIN-CONTAINING PROTEIN-RELATED"/>
    <property type="match status" value="1"/>
</dbReference>
<dbReference type="Pfam" id="PF07992">
    <property type="entry name" value="Pyr_redox_2"/>
    <property type="match status" value="1"/>
</dbReference>
<dbReference type="Pfam" id="PF14759">
    <property type="entry name" value="Reductase_C"/>
    <property type="match status" value="1"/>
</dbReference>
<dbReference type="PRINTS" id="PR00368">
    <property type="entry name" value="FADPNR"/>
</dbReference>
<dbReference type="PRINTS" id="PR00411">
    <property type="entry name" value="PNDRDTASEI"/>
</dbReference>
<dbReference type="SUPFAM" id="SSF51905">
    <property type="entry name" value="FAD/NAD(P)-binding domain"/>
    <property type="match status" value="2"/>
</dbReference>
<dbReference type="SUPFAM" id="SSF55424">
    <property type="entry name" value="FAD/NAD-linked reductases, dimerisation (C-terminal) domain"/>
    <property type="match status" value="1"/>
</dbReference>
<reference key="1">
    <citation type="journal article" date="2010" name="PLoS ONE">
        <title>The genes coding for the conversion of carbazole to catechol are flanked by IS6100 elements in Sphingomonas sp. strain XLDN2-5.</title>
        <authorList>
            <person name="Gai Z."/>
            <person name="Wang X."/>
            <person name="Liu X."/>
            <person name="Tai C."/>
            <person name="Tang H."/>
            <person name="He X."/>
            <person name="Wu G."/>
            <person name="Deng Z."/>
            <person name="Xu P."/>
        </authorList>
    </citation>
    <scope>NUCLEOTIDE SEQUENCE [GENOMIC DNA]</scope>
    <scope>FUNCTION IN THE CARBAZOLE DEGRADATION</scope>
    <scope>NOMENCLATURE</scope>
    <source>
        <strain>XLDN2-5</strain>
    </source>
</reference>
<accession>D5IGG6</accession>
<organism>
    <name type="scientific">Sphingomonas sp</name>
    <dbReference type="NCBI Taxonomy" id="28214"/>
    <lineage>
        <taxon>Bacteria</taxon>
        <taxon>Pseudomonadati</taxon>
        <taxon>Pseudomonadota</taxon>
        <taxon>Alphaproteobacteria</taxon>
        <taxon>Sphingomonadales</taxon>
        <taxon>Sphingomonadaceae</taxon>
        <taxon>Sphingomonas</taxon>
    </lineage>
</organism>
<name>FDR_SPHSX</name>
<comment type="function">
    <text evidence="3">Part of the multicomponent carbazole 1,9a-dioxygenase (CARDO), that converts carbazole (CAR) into 2-aminobiphenyl-2,3-diol.</text>
</comment>
<comment type="catalytic activity">
    <reaction>
        <text>2 reduced [2Fe-2S]-[ferredoxin] + NAD(+) + H(+) = 2 oxidized [2Fe-2S]-[ferredoxin] + NADH</text>
        <dbReference type="Rhea" id="RHEA:16521"/>
        <dbReference type="Rhea" id="RHEA-COMP:10000"/>
        <dbReference type="Rhea" id="RHEA-COMP:10001"/>
        <dbReference type="ChEBI" id="CHEBI:15378"/>
        <dbReference type="ChEBI" id="CHEBI:33737"/>
        <dbReference type="ChEBI" id="CHEBI:33738"/>
        <dbReference type="ChEBI" id="CHEBI:57540"/>
        <dbReference type="ChEBI" id="CHEBI:57945"/>
        <dbReference type="EC" id="1.18.1.3"/>
    </reaction>
</comment>
<comment type="catalytic activity">
    <reaction>
        <text>2 reduced [2Fe-2S]-[ferredoxin] + NADP(+) + H(+) = 2 oxidized [2Fe-2S]-[ferredoxin] + NADPH</text>
        <dbReference type="Rhea" id="RHEA:20125"/>
        <dbReference type="Rhea" id="RHEA-COMP:10000"/>
        <dbReference type="Rhea" id="RHEA-COMP:10001"/>
        <dbReference type="ChEBI" id="CHEBI:15378"/>
        <dbReference type="ChEBI" id="CHEBI:33737"/>
        <dbReference type="ChEBI" id="CHEBI:33738"/>
        <dbReference type="ChEBI" id="CHEBI:57783"/>
        <dbReference type="ChEBI" id="CHEBI:58349"/>
        <dbReference type="EC" id="1.18.1.2"/>
    </reaction>
</comment>
<comment type="cofactor">
    <cofactor evidence="1">
        <name>FAD</name>
        <dbReference type="ChEBI" id="CHEBI:57692"/>
    </cofactor>
</comment>
<comment type="subunit">
    <text evidence="1">Monomer. Carbazole 1,9a-dioxygenase complex consists of a terminal oxygenase component CarAa, a ferredoxin reductase component fdr and a ferredoxin component CarAc (By similarity).</text>
</comment>
<comment type="similarity">
    <text evidence="4">Belongs to the FAD-dependent oxidoreductase family.</text>
</comment>
<sequence>MTDTHYDVVIVGAGHGGAQTAIALRQNGFAGTIAIIGAEPDLPYERPPLSKEYLAAEKGFERILIRPASFWNDRHIAMHLGCAVERVDPTQRLVFLADGRSMGYGDLVWCAGGSARRLDCTGHDLGGVHYVRTRADTDALAAELPGVSKVVIIGGGYIGLEAAAVMAKFGKNVTLIEALDRVLARVAGEPLSRFFEEKHRSRGVDVRLRTKVGCLLGQDGRVTHVELNDADPIPADLVIVGIGIIPAISPLVVAGAKASNGLLVDASGRTSIPHVYALGDCAAHVNSFAPNDIPIRLESVQNANDQAVVVARTICGTAAQYHAVPWFWSSQYDIRLQTVGLTAGYDQTFVRGDPATGSFTVVYGRDGRVIALDCVNATKDYVQGKRLVEAKALIEPGMTDPQYPLKNFMTPSPA</sequence>
<gene>
    <name type="primary">fdr</name>
</gene>
<feature type="chain" id="PRO_0000419027" description="Ferredoxin--NAD(P)(+) reductase fdr">
    <location>
        <begin position="1"/>
        <end position="414"/>
    </location>
</feature>
<feature type="binding site" evidence="2">
    <location>
        <begin position="7"/>
        <end position="38"/>
    </location>
    <ligand>
        <name>FAD</name>
        <dbReference type="ChEBI" id="CHEBI:57692"/>
    </ligand>
</feature>
<feature type="binding site" evidence="2">
    <location>
        <begin position="149"/>
        <end position="177"/>
    </location>
    <ligand>
        <name>NAD(+)</name>
        <dbReference type="ChEBI" id="CHEBI:57540"/>
    </ligand>
</feature>